<protein>
    <recommendedName>
        <fullName evidence="12">Glucosamine-6-phosphate deaminase 1</fullName>
        <shortName>GlcN6P deaminase 1</shortName>
        <ecNumber evidence="5">3.5.99.6</ecNumber>
    </recommendedName>
    <alternativeName>
        <fullName evidence="12">Glucosamine-6-phosphate isomerase 1</fullName>
    </alternativeName>
    <alternativeName>
        <fullName evidence="12">Protein oscillin</fullName>
    </alternativeName>
</protein>
<dbReference type="EC" id="3.5.99.6" evidence="5"/>
<dbReference type="EMBL" id="AF048826">
    <property type="protein sequence ID" value="AAC05123.1"/>
    <property type="molecule type" value="mRNA"/>
</dbReference>
<dbReference type="EMBL" id="AJ002231">
    <property type="protein sequence ID" value="CAA05259.1"/>
    <property type="molecule type" value="mRNA"/>
</dbReference>
<dbReference type="EMBL" id="AF029914">
    <property type="protein sequence ID" value="AAB84217.1"/>
    <property type="molecule type" value="mRNA"/>
</dbReference>
<dbReference type="EMBL" id="AF035809">
    <property type="protein sequence ID" value="AAB88748.1"/>
    <property type="molecule type" value="Genomic_DNA"/>
</dbReference>
<dbReference type="EMBL" id="AF035804">
    <property type="protein sequence ID" value="AAB88748.1"/>
    <property type="status" value="JOINED"/>
    <property type="molecule type" value="Genomic_DNA"/>
</dbReference>
<dbReference type="EMBL" id="AF035805">
    <property type="protein sequence ID" value="AAB88748.1"/>
    <property type="status" value="JOINED"/>
    <property type="molecule type" value="Genomic_DNA"/>
</dbReference>
<dbReference type="EMBL" id="AF035806">
    <property type="protein sequence ID" value="AAB88748.1"/>
    <property type="status" value="JOINED"/>
    <property type="molecule type" value="Genomic_DNA"/>
</dbReference>
<dbReference type="EMBL" id="AF035807">
    <property type="protein sequence ID" value="AAB88748.1"/>
    <property type="status" value="JOINED"/>
    <property type="molecule type" value="Genomic_DNA"/>
</dbReference>
<dbReference type="EMBL" id="AF035808">
    <property type="protein sequence ID" value="AAB88748.1"/>
    <property type="status" value="JOINED"/>
    <property type="molecule type" value="Genomic_DNA"/>
</dbReference>
<dbReference type="EMBL" id="D31766">
    <property type="protein sequence ID" value="BAA06544.2"/>
    <property type="status" value="ALT_INIT"/>
    <property type="molecule type" value="mRNA"/>
</dbReference>
<dbReference type="EMBL" id="AK296452">
    <property type="protein sequence ID" value="BAH12360.1"/>
    <property type="molecule type" value="mRNA"/>
</dbReference>
<dbReference type="EMBL" id="AC005740">
    <property type="protein sequence ID" value="AAC62119.1"/>
    <property type="molecule type" value="Genomic_DNA"/>
</dbReference>
<dbReference type="EMBL" id="CH471062">
    <property type="protein sequence ID" value="EAW61890.1"/>
    <property type="molecule type" value="Genomic_DNA"/>
</dbReference>
<dbReference type="EMBL" id="CH471062">
    <property type="protein sequence ID" value="EAW61891.1"/>
    <property type="molecule type" value="Genomic_DNA"/>
</dbReference>
<dbReference type="EMBL" id="CH471062">
    <property type="protein sequence ID" value="EAW61892.1"/>
    <property type="molecule type" value="Genomic_DNA"/>
</dbReference>
<dbReference type="EMBL" id="CH471062">
    <property type="protein sequence ID" value="EAW61893.1"/>
    <property type="molecule type" value="Genomic_DNA"/>
</dbReference>
<dbReference type="EMBL" id="BC012853">
    <property type="protein sequence ID" value="AAH12853.1"/>
    <property type="molecule type" value="mRNA"/>
</dbReference>
<dbReference type="EMBL" id="BC020769">
    <property type="protein sequence ID" value="AAH20769.1"/>
    <property type="molecule type" value="mRNA"/>
</dbReference>
<dbReference type="EMBL" id="BC022322">
    <property type="protein sequence ID" value="AAH22322.1"/>
    <property type="molecule type" value="mRNA"/>
</dbReference>
<dbReference type="CCDS" id="CCDS4272.1">
    <molecule id="P46926-1"/>
</dbReference>
<dbReference type="RefSeq" id="NP_005462.1">
    <molecule id="P46926-1"/>
    <property type="nucleotide sequence ID" value="NM_005471.5"/>
</dbReference>
<dbReference type="RefSeq" id="XP_006714810.1">
    <molecule id="P46926-1"/>
    <property type="nucleotide sequence ID" value="XM_006714747.2"/>
</dbReference>
<dbReference type="RefSeq" id="XP_011535839.1">
    <property type="nucleotide sequence ID" value="XM_011537537.1"/>
</dbReference>
<dbReference type="RefSeq" id="XP_047272538.1">
    <molecule id="P46926-1"/>
    <property type="nucleotide sequence ID" value="XM_047416582.1"/>
</dbReference>
<dbReference type="RefSeq" id="XP_054207345.1">
    <molecule id="P46926-1"/>
    <property type="nucleotide sequence ID" value="XM_054351370.1"/>
</dbReference>
<dbReference type="PDB" id="1NE7">
    <property type="method" value="X-ray"/>
    <property type="resolution" value="1.75 A"/>
    <property type="chains" value="A/B/C/D/E/F=1-289"/>
</dbReference>
<dbReference type="PDBsum" id="1NE7"/>
<dbReference type="SMR" id="P46926"/>
<dbReference type="BioGRID" id="115325">
    <property type="interactions" value="64"/>
</dbReference>
<dbReference type="FunCoup" id="P46926">
    <property type="interactions" value="1150"/>
</dbReference>
<dbReference type="IntAct" id="P46926">
    <property type="interactions" value="19"/>
</dbReference>
<dbReference type="MINT" id="P46926"/>
<dbReference type="STRING" id="9606.ENSP00000423674"/>
<dbReference type="DrugBank" id="DB02445">
    <property type="generic name" value="2-Deoxy-2-Amino Glucitol-6-Phosphate"/>
</dbReference>
<dbReference type="DrugBank" id="DB02379">
    <property type="generic name" value="Beta-D-Glucose"/>
</dbReference>
<dbReference type="DrugBank" id="DB03951">
    <property type="generic name" value="N-acetyl-D-glucosamine-6-phosphate"/>
</dbReference>
<dbReference type="GlyGen" id="P46926">
    <property type="glycosylation" value="1 site, 1 O-linked glycan (1 site)"/>
</dbReference>
<dbReference type="iPTMnet" id="P46926"/>
<dbReference type="MetOSite" id="P46926"/>
<dbReference type="PhosphoSitePlus" id="P46926"/>
<dbReference type="BioMuta" id="GNPDA1"/>
<dbReference type="jPOST" id="P46926"/>
<dbReference type="MassIVE" id="P46926"/>
<dbReference type="PaxDb" id="9606-ENSP00000423674"/>
<dbReference type="PeptideAtlas" id="P46926"/>
<dbReference type="ProteomicsDB" id="55767">
    <molecule id="P46926-1"/>
</dbReference>
<dbReference type="ProteomicsDB" id="6552"/>
<dbReference type="Pumba" id="P46926"/>
<dbReference type="Antibodypedia" id="606">
    <property type="antibodies" value="251 antibodies from 32 providers"/>
</dbReference>
<dbReference type="DNASU" id="10007"/>
<dbReference type="Ensembl" id="ENST00000311337.11">
    <molecule id="P46926-1"/>
    <property type="protein sequence ID" value="ENSP00000311876.6"/>
    <property type="gene ID" value="ENSG00000113552.16"/>
</dbReference>
<dbReference type="Ensembl" id="ENST00000500692.6">
    <molecule id="P46926-1"/>
    <property type="protein sequence ID" value="ENSP00000424275.1"/>
    <property type="gene ID" value="ENSG00000113552.16"/>
</dbReference>
<dbReference type="Ensembl" id="ENST00000503794.5">
    <molecule id="P46926-1"/>
    <property type="protein sequence ID" value="ENSP00000423485.1"/>
    <property type="gene ID" value="ENSG00000113552.16"/>
</dbReference>
<dbReference type="Ensembl" id="ENST00000508177.5">
    <molecule id="P46926-1"/>
    <property type="protein sequence ID" value="ENSP00000423674.1"/>
    <property type="gene ID" value="ENSG00000113552.16"/>
</dbReference>
<dbReference type="GeneID" id="10007"/>
<dbReference type="KEGG" id="hsa:10007"/>
<dbReference type="MANE-Select" id="ENST00000311337.11">
    <property type="protein sequence ID" value="ENSP00000311876.6"/>
    <property type="RefSeq nucleotide sequence ID" value="NM_005471.5"/>
    <property type="RefSeq protein sequence ID" value="NP_005462.1"/>
</dbReference>
<dbReference type="UCSC" id="uc003lmf.5">
    <molecule id="P46926-1"/>
    <property type="organism name" value="human"/>
</dbReference>
<dbReference type="AGR" id="HGNC:4417"/>
<dbReference type="CTD" id="10007"/>
<dbReference type="DisGeNET" id="10007"/>
<dbReference type="GeneCards" id="GNPDA1"/>
<dbReference type="HGNC" id="HGNC:4417">
    <property type="gene designation" value="GNPDA1"/>
</dbReference>
<dbReference type="HPA" id="ENSG00000113552">
    <property type="expression patterns" value="Low tissue specificity"/>
</dbReference>
<dbReference type="MIM" id="601798">
    <property type="type" value="gene"/>
</dbReference>
<dbReference type="neXtProt" id="NX_P46926"/>
<dbReference type="OpenTargets" id="ENSG00000113552"/>
<dbReference type="PharmGKB" id="PA28796"/>
<dbReference type="VEuPathDB" id="HostDB:ENSG00000113552"/>
<dbReference type="eggNOG" id="KOG3148">
    <property type="taxonomic scope" value="Eukaryota"/>
</dbReference>
<dbReference type="GeneTree" id="ENSGT00390000014316"/>
<dbReference type="InParanoid" id="P46926"/>
<dbReference type="OMA" id="HVITQGI"/>
<dbReference type="OrthoDB" id="7663298at2759"/>
<dbReference type="PAN-GO" id="P46926">
    <property type="GO annotations" value="6 GO annotations based on evolutionary models"/>
</dbReference>
<dbReference type="PhylomeDB" id="P46926"/>
<dbReference type="TreeFam" id="TF300841"/>
<dbReference type="BRENDA" id="3.5.99.6">
    <property type="organism ID" value="2681"/>
</dbReference>
<dbReference type="PathwayCommons" id="P46926"/>
<dbReference type="Reactome" id="R-HSA-70171">
    <property type="pathway name" value="Glycolysis"/>
</dbReference>
<dbReference type="SABIO-RK" id="P46926"/>
<dbReference type="SignaLink" id="P46926"/>
<dbReference type="UniPathway" id="UPA00113">
    <property type="reaction ID" value="UER00528"/>
</dbReference>
<dbReference type="BioGRID-ORCS" id="10007">
    <property type="hits" value="8 hits in 1161 CRISPR screens"/>
</dbReference>
<dbReference type="ChiTaRS" id="GNPDA1">
    <property type="organism name" value="human"/>
</dbReference>
<dbReference type="EvolutionaryTrace" id="P46926"/>
<dbReference type="GeneWiki" id="GNPDA1"/>
<dbReference type="GenomeRNAi" id="10007"/>
<dbReference type="Pharos" id="P46926">
    <property type="development level" value="Tbio"/>
</dbReference>
<dbReference type="PRO" id="PR:P46926"/>
<dbReference type="Proteomes" id="UP000005640">
    <property type="component" value="Chromosome 5"/>
</dbReference>
<dbReference type="RNAct" id="P46926">
    <property type="molecule type" value="protein"/>
</dbReference>
<dbReference type="Bgee" id="ENSG00000113552">
    <property type="expression patterns" value="Expressed in type B pancreatic cell and 213 other cell types or tissues"/>
</dbReference>
<dbReference type="ExpressionAtlas" id="P46926">
    <property type="expression patterns" value="baseline and differential"/>
</dbReference>
<dbReference type="GO" id="GO:0005737">
    <property type="term" value="C:cytoplasm"/>
    <property type="evidence" value="ECO:0000250"/>
    <property type="project" value="UniProtKB"/>
</dbReference>
<dbReference type="GO" id="GO:0005829">
    <property type="term" value="C:cytosol"/>
    <property type="evidence" value="ECO:0000304"/>
    <property type="project" value="Reactome"/>
</dbReference>
<dbReference type="GO" id="GO:0070062">
    <property type="term" value="C:extracellular exosome"/>
    <property type="evidence" value="ECO:0007005"/>
    <property type="project" value="UniProtKB"/>
</dbReference>
<dbReference type="GO" id="GO:0004342">
    <property type="term" value="F:glucosamine-6-phosphate deaminase activity"/>
    <property type="evidence" value="ECO:0000314"/>
    <property type="project" value="UniProtKB"/>
</dbReference>
<dbReference type="GO" id="GO:0042802">
    <property type="term" value="F:identical protein binding"/>
    <property type="evidence" value="ECO:0000318"/>
    <property type="project" value="GO_Central"/>
</dbReference>
<dbReference type="GO" id="GO:0016853">
    <property type="term" value="F:isomerase activity"/>
    <property type="evidence" value="ECO:0007669"/>
    <property type="project" value="UniProtKB-KW"/>
</dbReference>
<dbReference type="GO" id="GO:0005975">
    <property type="term" value="P:carbohydrate metabolic process"/>
    <property type="evidence" value="ECO:0007669"/>
    <property type="project" value="InterPro"/>
</dbReference>
<dbReference type="GO" id="GO:0006091">
    <property type="term" value="P:generation of precursor metabolites and energy"/>
    <property type="evidence" value="ECO:0000315"/>
    <property type="project" value="UniProtKB"/>
</dbReference>
<dbReference type="GO" id="GO:0006043">
    <property type="term" value="P:glucosamine catabolic process"/>
    <property type="evidence" value="ECO:0000315"/>
    <property type="project" value="UniProtKB"/>
</dbReference>
<dbReference type="GO" id="GO:0006046">
    <property type="term" value="P:N-acetylglucosamine catabolic process"/>
    <property type="evidence" value="ECO:0000318"/>
    <property type="project" value="GO_Central"/>
</dbReference>
<dbReference type="GO" id="GO:0019262">
    <property type="term" value="P:N-acetylneuraminate catabolic process"/>
    <property type="evidence" value="ECO:0000318"/>
    <property type="project" value="GO_Central"/>
</dbReference>
<dbReference type="GO" id="GO:0007338">
    <property type="term" value="P:single fertilization"/>
    <property type="evidence" value="ECO:0000304"/>
    <property type="project" value="ProtInc"/>
</dbReference>
<dbReference type="GO" id="GO:0006048">
    <property type="term" value="P:UDP-N-acetylglucosamine biosynthetic process"/>
    <property type="evidence" value="ECO:0000315"/>
    <property type="project" value="UniProtKB"/>
</dbReference>
<dbReference type="CDD" id="cd01399">
    <property type="entry name" value="GlcN6P_deaminase"/>
    <property type="match status" value="1"/>
</dbReference>
<dbReference type="FunFam" id="3.40.50.1360:FF:000004">
    <property type="entry name" value="Glucosamine-6-phosphate isomerase"/>
    <property type="match status" value="1"/>
</dbReference>
<dbReference type="Gene3D" id="3.40.50.1360">
    <property type="match status" value="1"/>
</dbReference>
<dbReference type="HAMAP" id="MF_01241">
    <property type="entry name" value="GlcN6P_deamin"/>
    <property type="match status" value="1"/>
</dbReference>
<dbReference type="InterPro" id="IPR006148">
    <property type="entry name" value="Glc/Gal-6P_isomerase"/>
</dbReference>
<dbReference type="InterPro" id="IPR004547">
    <property type="entry name" value="Glucosamine6P_isomerase"/>
</dbReference>
<dbReference type="InterPro" id="IPR018321">
    <property type="entry name" value="Glucosamine6P_isomerase_CS"/>
</dbReference>
<dbReference type="InterPro" id="IPR037171">
    <property type="entry name" value="NagB/RpiA_transferase-like"/>
</dbReference>
<dbReference type="NCBIfam" id="TIGR00502">
    <property type="entry name" value="nagB"/>
    <property type="match status" value="1"/>
</dbReference>
<dbReference type="PANTHER" id="PTHR11280">
    <property type="entry name" value="GLUCOSAMINE-6-PHOSPHATE ISOMERASE"/>
    <property type="match status" value="1"/>
</dbReference>
<dbReference type="PANTHER" id="PTHR11280:SF8">
    <property type="entry name" value="GLUCOSAMINE-6-PHOSPHATE ISOMERASE 1"/>
    <property type="match status" value="1"/>
</dbReference>
<dbReference type="Pfam" id="PF01182">
    <property type="entry name" value="Glucosamine_iso"/>
    <property type="match status" value="1"/>
</dbReference>
<dbReference type="SUPFAM" id="SSF100950">
    <property type="entry name" value="NagB/RpiA/CoA transferase-like"/>
    <property type="match status" value="1"/>
</dbReference>
<dbReference type="PROSITE" id="PS01161">
    <property type="entry name" value="GLC_GALNAC_ISOMERASE"/>
    <property type="match status" value="1"/>
</dbReference>
<gene>
    <name evidence="8 12" type="primary">GNPDA1</name>
    <name evidence="12" type="synonym">GNPI</name>
    <name type="synonym">HLN</name>
    <name type="synonym">KIAA0060</name>
</gene>
<evidence type="ECO:0000250" key="1"/>
<evidence type="ECO:0000250" key="2">
    <source>
        <dbReference type="UniProtKB" id="O88958"/>
    </source>
</evidence>
<evidence type="ECO:0000250" key="3">
    <source>
        <dbReference type="UniProtKB" id="Q64422"/>
    </source>
</evidence>
<evidence type="ECO:0000269" key="4">
    <source>
    </source>
</evidence>
<evidence type="ECO:0000269" key="5">
    <source>
    </source>
</evidence>
<evidence type="ECO:0000269" key="6">
    <source>
    </source>
</evidence>
<evidence type="ECO:0000303" key="7">
    <source>
    </source>
</evidence>
<evidence type="ECO:0000303" key="8">
    <source>
    </source>
</evidence>
<evidence type="ECO:0000305" key="9"/>
<evidence type="ECO:0000305" key="10">
    <source>
    </source>
</evidence>
<evidence type="ECO:0000305" key="11">
    <source>
    </source>
</evidence>
<evidence type="ECO:0000312" key="12">
    <source>
        <dbReference type="HGNC" id="HGNC:4417"/>
    </source>
</evidence>
<evidence type="ECO:0000312" key="13">
    <source>
        <dbReference type="Proteomes" id="UP000005640"/>
    </source>
</evidence>
<evidence type="ECO:0007744" key="14">
    <source>
    </source>
</evidence>
<evidence type="ECO:0007829" key="15">
    <source>
        <dbReference type="PDB" id="1NE7"/>
    </source>
</evidence>
<reference key="1">
    <citation type="journal article" date="1998" name="FASEB J.">
        <title>Molecularly cloned mammalian glucosamine-6-phosphate deaminase localizes to transporting epithelium and lacks oscillin activity.</title>
        <authorList>
            <person name="Wolosker H."/>
            <person name="Kline D."/>
            <person name="Bian Y."/>
            <person name="Blackshaw S."/>
            <person name="Cameron A.M."/>
            <person name="Fralich T.J."/>
            <person name="Schnaar R.L."/>
            <person name="Snyder S.H."/>
        </authorList>
    </citation>
    <scope>NUCLEOTIDE SEQUENCE [MRNA] (ISOFORM 1)</scope>
    <source>
        <tissue>Brain</tissue>
    </source>
</reference>
<reference key="2">
    <citation type="journal article" date="1998" name="Gene">
        <title>The human glucosamine-6-phosphate deaminase gene: cDNA cloning and expression, genomic organization and chromosomal localization.</title>
        <authorList>
            <person name="Shevchenko V."/>
            <person name="Hogben M."/>
            <person name="Ekong R."/>
            <person name="Parrington J."/>
            <person name="Lai F.A."/>
        </authorList>
    </citation>
    <scope>NUCLEOTIDE SEQUENCE [MRNA] (ISOFORM 1)</scope>
    <source>
        <tissue>Testis</tissue>
    </source>
</reference>
<reference key="3">
    <citation type="submission" date="1997-10" db="EMBL/GenBank/DDBJ databases">
        <authorList>
            <person name="Hirata S."/>
            <person name="Koh T."/>
            <person name="Hoshi K."/>
        </authorList>
    </citation>
    <scope>NUCLEOTIDE SEQUENCE [GENOMIC DNA / MRNA] (ISOFORM 1)</scope>
    <source>
        <tissue>Testis</tissue>
    </source>
</reference>
<reference key="4">
    <citation type="journal article" date="1994" name="DNA Res.">
        <title>Prediction of the coding sequences of unidentified human genes. II. The coding sequences of 40 new genes (KIAA0041-KIAA0080) deduced by analysis of cDNA clones from human cell line KG-1.</title>
        <authorList>
            <person name="Nomura N."/>
            <person name="Nagase T."/>
            <person name="Miyajima N."/>
            <person name="Sazuka T."/>
            <person name="Tanaka A."/>
            <person name="Sato S."/>
            <person name="Seki N."/>
            <person name="Kawarabayasi Y."/>
            <person name="Ishikawa K."/>
            <person name="Tabata S."/>
        </authorList>
    </citation>
    <scope>NUCLEOTIDE SEQUENCE [LARGE SCALE MRNA] (ISOFORM 1)</scope>
    <source>
        <tissue>Bone marrow</tissue>
    </source>
</reference>
<reference key="5">
    <citation type="journal article" date="2004" name="Nat. Genet.">
        <title>Complete sequencing and characterization of 21,243 full-length human cDNAs.</title>
        <authorList>
            <person name="Ota T."/>
            <person name="Suzuki Y."/>
            <person name="Nishikawa T."/>
            <person name="Otsuki T."/>
            <person name="Sugiyama T."/>
            <person name="Irie R."/>
            <person name="Wakamatsu A."/>
            <person name="Hayashi K."/>
            <person name="Sato H."/>
            <person name="Nagai K."/>
            <person name="Kimura K."/>
            <person name="Makita H."/>
            <person name="Sekine M."/>
            <person name="Obayashi M."/>
            <person name="Nishi T."/>
            <person name="Shibahara T."/>
            <person name="Tanaka T."/>
            <person name="Ishii S."/>
            <person name="Yamamoto J."/>
            <person name="Saito K."/>
            <person name="Kawai Y."/>
            <person name="Isono Y."/>
            <person name="Nakamura Y."/>
            <person name="Nagahari K."/>
            <person name="Murakami K."/>
            <person name="Yasuda T."/>
            <person name="Iwayanagi T."/>
            <person name="Wagatsuma M."/>
            <person name="Shiratori A."/>
            <person name="Sudo H."/>
            <person name="Hosoiri T."/>
            <person name="Kaku Y."/>
            <person name="Kodaira H."/>
            <person name="Kondo H."/>
            <person name="Sugawara M."/>
            <person name="Takahashi M."/>
            <person name="Kanda K."/>
            <person name="Yokoi T."/>
            <person name="Furuya T."/>
            <person name="Kikkawa E."/>
            <person name="Omura Y."/>
            <person name="Abe K."/>
            <person name="Kamihara K."/>
            <person name="Katsuta N."/>
            <person name="Sato K."/>
            <person name="Tanikawa M."/>
            <person name="Yamazaki M."/>
            <person name="Ninomiya K."/>
            <person name="Ishibashi T."/>
            <person name="Yamashita H."/>
            <person name="Murakawa K."/>
            <person name="Fujimori K."/>
            <person name="Tanai H."/>
            <person name="Kimata M."/>
            <person name="Watanabe M."/>
            <person name="Hiraoka S."/>
            <person name="Chiba Y."/>
            <person name="Ishida S."/>
            <person name="Ono Y."/>
            <person name="Takiguchi S."/>
            <person name="Watanabe S."/>
            <person name="Yosida M."/>
            <person name="Hotuta T."/>
            <person name="Kusano J."/>
            <person name="Kanehori K."/>
            <person name="Takahashi-Fujii A."/>
            <person name="Hara H."/>
            <person name="Tanase T.-O."/>
            <person name="Nomura Y."/>
            <person name="Togiya S."/>
            <person name="Komai F."/>
            <person name="Hara R."/>
            <person name="Takeuchi K."/>
            <person name="Arita M."/>
            <person name="Imose N."/>
            <person name="Musashino K."/>
            <person name="Yuuki H."/>
            <person name="Oshima A."/>
            <person name="Sasaki N."/>
            <person name="Aotsuka S."/>
            <person name="Yoshikawa Y."/>
            <person name="Matsunawa H."/>
            <person name="Ichihara T."/>
            <person name="Shiohata N."/>
            <person name="Sano S."/>
            <person name="Moriya S."/>
            <person name="Momiyama H."/>
            <person name="Satoh N."/>
            <person name="Takami S."/>
            <person name="Terashima Y."/>
            <person name="Suzuki O."/>
            <person name="Nakagawa S."/>
            <person name="Senoh A."/>
            <person name="Mizoguchi H."/>
            <person name="Goto Y."/>
            <person name="Shimizu F."/>
            <person name="Wakebe H."/>
            <person name="Hishigaki H."/>
            <person name="Watanabe T."/>
            <person name="Sugiyama A."/>
            <person name="Takemoto M."/>
            <person name="Kawakami B."/>
            <person name="Yamazaki M."/>
            <person name="Watanabe K."/>
            <person name="Kumagai A."/>
            <person name="Itakura S."/>
            <person name="Fukuzumi Y."/>
            <person name="Fujimori Y."/>
            <person name="Komiyama M."/>
            <person name="Tashiro H."/>
            <person name="Tanigami A."/>
            <person name="Fujiwara T."/>
            <person name="Ono T."/>
            <person name="Yamada K."/>
            <person name="Fujii Y."/>
            <person name="Ozaki K."/>
            <person name="Hirao M."/>
            <person name="Ohmori Y."/>
            <person name="Kawabata A."/>
            <person name="Hikiji T."/>
            <person name="Kobatake N."/>
            <person name="Inagaki H."/>
            <person name="Ikema Y."/>
            <person name="Okamoto S."/>
            <person name="Okitani R."/>
            <person name="Kawakami T."/>
            <person name="Noguchi S."/>
            <person name="Itoh T."/>
            <person name="Shigeta K."/>
            <person name="Senba T."/>
            <person name="Matsumura K."/>
            <person name="Nakajima Y."/>
            <person name="Mizuno T."/>
            <person name="Morinaga M."/>
            <person name="Sasaki M."/>
            <person name="Togashi T."/>
            <person name="Oyama M."/>
            <person name="Hata H."/>
            <person name="Watanabe M."/>
            <person name="Komatsu T."/>
            <person name="Mizushima-Sugano J."/>
            <person name="Satoh T."/>
            <person name="Shirai Y."/>
            <person name="Takahashi Y."/>
            <person name="Nakagawa K."/>
            <person name="Okumura K."/>
            <person name="Nagase T."/>
            <person name="Nomura N."/>
            <person name="Kikuchi H."/>
            <person name="Masuho Y."/>
            <person name="Yamashita R."/>
            <person name="Nakai K."/>
            <person name="Yada T."/>
            <person name="Nakamura Y."/>
            <person name="Ohara O."/>
            <person name="Isogai T."/>
            <person name="Sugano S."/>
        </authorList>
    </citation>
    <scope>NUCLEOTIDE SEQUENCE [LARGE SCALE MRNA] (ISOFORM 2)</scope>
    <source>
        <tissue>Thalamus</tissue>
    </source>
</reference>
<reference key="6">
    <citation type="journal article" date="2004" name="Nature">
        <title>The DNA sequence and comparative analysis of human chromosome 5.</title>
        <authorList>
            <person name="Schmutz J."/>
            <person name="Martin J."/>
            <person name="Terry A."/>
            <person name="Couronne O."/>
            <person name="Grimwood J."/>
            <person name="Lowry S."/>
            <person name="Gordon L.A."/>
            <person name="Scott D."/>
            <person name="Xie G."/>
            <person name="Huang W."/>
            <person name="Hellsten U."/>
            <person name="Tran-Gyamfi M."/>
            <person name="She X."/>
            <person name="Prabhakar S."/>
            <person name="Aerts A."/>
            <person name="Altherr M."/>
            <person name="Bajorek E."/>
            <person name="Black S."/>
            <person name="Branscomb E."/>
            <person name="Caoile C."/>
            <person name="Challacombe J.F."/>
            <person name="Chan Y.M."/>
            <person name="Denys M."/>
            <person name="Detter J.C."/>
            <person name="Escobar J."/>
            <person name="Flowers D."/>
            <person name="Fotopulos D."/>
            <person name="Glavina T."/>
            <person name="Gomez M."/>
            <person name="Gonzales E."/>
            <person name="Goodstein D."/>
            <person name="Grigoriev I."/>
            <person name="Groza M."/>
            <person name="Hammon N."/>
            <person name="Hawkins T."/>
            <person name="Haydu L."/>
            <person name="Israni S."/>
            <person name="Jett J."/>
            <person name="Kadner K."/>
            <person name="Kimball H."/>
            <person name="Kobayashi A."/>
            <person name="Lopez F."/>
            <person name="Lou Y."/>
            <person name="Martinez D."/>
            <person name="Medina C."/>
            <person name="Morgan J."/>
            <person name="Nandkeshwar R."/>
            <person name="Noonan J.P."/>
            <person name="Pitluck S."/>
            <person name="Pollard M."/>
            <person name="Predki P."/>
            <person name="Priest J."/>
            <person name="Ramirez L."/>
            <person name="Retterer J."/>
            <person name="Rodriguez A."/>
            <person name="Rogers S."/>
            <person name="Salamov A."/>
            <person name="Salazar A."/>
            <person name="Thayer N."/>
            <person name="Tice H."/>
            <person name="Tsai M."/>
            <person name="Ustaszewska A."/>
            <person name="Vo N."/>
            <person name="Wheeler J."/>
            <person name="Wu K."/>
            <person name="Yang J."/>
            <person name="Dickson M."/>
            <person name="Cheng J.-F."/>
            <person name="Eichler E.E."/>
            <person name="Olsen A."/>
            <person name="Pennacchio L.A."/>
            <person name="Rokhsar D.S."/>
            <person name="Richardson P."/>
            <person name="Lucas S.M."/>
            <person name="Myers R.M."/>
            <person name="Rubin E.M."/>
        </authorList>
    </citation>
    <scope>NUCLEOTIDE SEQUENCE [LARGE SCALE GENOMIC DNA]</scope>
</reference>
<reference key="7">
    <citation type="submission" date="2005-09" db="EMBL/GenBank/DDBJ databases">
        <authorList>
            <person name="Mural R.J."/>
            <person name="Istrail S."/>
            <person name="Sutton G.G."/>
            <person name="Florea L."/>
            <person name="Halpern A.L."/>
            <person name="Mobarry C.M."/>
            <person name="Lippert R."/>
            <person name="Walenz B."/>
            <person name="Shatkay H."/>
            <person name="Dew I."/>
            <person name="Miller J.R."/>
            <person name="Flanigan M.J."/>
            <person name="Edwards N.J."/>
            <person name="Bolanos R."/>
            <person name="Fasulo D."/>
            <person name="Halldorsson B.V."/>
            <person name="Hannenhalli S."/>
            <person name="Turner R."/>
            <person name="Yooseph S."/>
            <person name="Lu F."/>
            <person name="Nusskern D.R."/>
            <person name="Shue B.C."/>
            <person name="Zheng X.H."/>
            <person name="Zhong F."/>
            <person name="Delcher A.L."/>
            <person name="Huson D.H."/>
            <person name="Kravitz S.A."/>
            <person name="Mouchard L."/>
            <person name="Reinert K."/>
            <person name="Remington K.A."/>
            <person name="Clark A.G."/>
            <person name="Waterman M.S."/>
            <person name="Eichler E.E."/>
            <person name="Adams M.D."/>
            <person name="Hunkapiller M.W."/>
            <person name="Myers E.W."/>
            <person name="Venter J.C."/>
        </authorList>
    </citation>
    <scope>NUCLEOTIDE SEQUENCE [LARGE SCALE GENOMIC DNA]</scope>
</reference>
<reference key="8">
    <citation type="journal article" date="2004" name="Genome Res.">
        <title>The status, quality, and expansion of the NIH full-length cDNA project: the Mammalian Gene Collection (MGC).</title>
        <authorList>
            <consortium name="The MGC Project Team"/>
        </authorList>
    </citation>
    <scope>NUCLEOTIDE SEQUENCE [LARGE SCALE MRNA] (ISOFORM 1)</scope>
    <source>
        <tissue>Ovary</tissue>
        <tissue>Skin</tissue>
    </source>
</reference>
<reference key="9">
    <citation type="journal article" date="2009" name="Science">
        <title>Lysine acetylation targets protein complexes and co-regulates major cellular functions.</title>
        <authorList>
            <person name="Choudhary C."/>
            <person name="Kumar C."/>
            <person name="Gnad F."/>
            <person name="Nielsen M.L."/>
            <person name="Rehman M."/>
            <person name="Walther T.C."/>
            <person name="Olsen J.V."/>
            <person name="Mann M."/>
        </authorList>
    </citation>
    <scope>ACETYLATION [LARGE SCALE ANALYSIS] AT LYS-64</scope>
    <scope>IDENTIFICATION BY MASS SPECTROMETRY [LARGE SCALE ANALYSIS]</scope>
</reference>
<reference key="10">
    <citation type="journal article" date="2011" name="BMC Syst. Biol.">
        <title>Initial characterization of the human central proteome.</title>
        <authorList>
            <person name="Burkard T.R."/>
            <person name="Planyavsky M."/>
            <person name="Kaupe I."/>
            <person name="Breitwieser F.P."/>
            <person name="Buerckstuemmer T."/>
            <person name="Bennett K.L."/>
            <person name="Superti-Furga G."/>
            <person name="Colinge J."/>
        </authorList>
    </citation>
    <scope>IDENTIFICATION BY MASS SPECTROMETRY [LARGE SCALE ANALYSIS]</scope>
</reference>
<reference key="11">
    <citation type="journal article" date="2011" name="Biochim. Biophys. Acta">
        <title>Allosteric kinetics of the isoform 1 of human glucosamine-6-phosphate deaminase.</title>
        <authorList>
            <person name="Alvarez-Anorve L.I."/>
            <person name="Alonzo D.A."/>
            <person name="Mora-Lugo R."/>
            <person name="Lara-Gonzalez S."/>
            <person name="Bustos-Jaimes I."/>
            <person name="Plumbridge J."/>
            <person name="Calcagno M.L."/>
        </authorList>
    </citation>
    <scope>FUNCTION</scope>
    <scope>CATALYTIC ACTIVITY</scope>
    <scope>ACTIVITY REGULATION</scope>
    <scope>BIOPHYSICOCHEMICAL PROPERTIES</scope>
    <scope>MUTAGENESIS OF 268-PRO--ASP-289 AND 275-LYS--ASP-289</scope>
</reference>
<reference key="12">
    <citation type="journal article" date="2016" name="Glycobiology">
        <title>Hexosamine biosynthesis in keratinocytes: roles of GFAT and GNPDA enzymes in the maintenance of UDP-GlcNAc content and hyaluronan synthesis.</title>
        <authorList>
            <person name="Oikari S."/>
            <person name="Makkonen K."/>
            <person name="Deen A.J."/>
            <person name="Tyni I."/>
            <person name="Kaernae R."/>
            <person name="Tammi R.H."/>
            <person name="Tammi M.I."/>
        </authorList>
    </citation>
    <scope>FUNCTION</scope>
    <scope>CATALYTIC ACTIVITY</scope>
    <scope>PATHWAY</scope>
</reference>
<reference key="13">
    <citation type="journal article" date="2003" name="FEBS Lett.">
        <title>Two mammalian glucosamine-6-phosphate deaminases: a structural and genetic study.</title>
        <authorList>
            <person name="Arreola R."/>
            <person name="Valderrama B."/>
            <person name="Morante M.L."/>
            <person name="Horjales E."/>
        </authorList>
    </citation>
    <scope>X-RAY CRYSTALLOGRAPHY (1.75 ANGSTROMS)</scope>
    <scope>SUBUNIT</scope>
</reference>
<proteinExistence type="evidence at protein level"/>
<organism evidence="13">
    <name type="scientific">Homo sapiens</name>
    <name type="common">Human</name>
    <dbReference type="NCBI Taxonomy" id="9606"/>
    <lineage>
        <taxon>Eukaryota</taxon>
        <taxon>Metazoa</taxon>
        <taxon>Chordata</taxon>
        <taxon>Craniata</taxon>
        <taxon>Vertebrata</taxon>
        <taxon>Euteleostomi</taxon>
        <taxon>Mammalia</taxon>
        <taxon>Eutheria</taxon>
        <taxon>Euarchontoglires</taxon>
        <taxon>Primates</taxon>
        <taxon>Haplorrhini</taxon>
        <taxon>Catarrhini</taxon>
        <taxon>Hominidae</taxon>
        <taxon>Homo</taxon>
    </lineage>
</organism>
<feature type="chain" id="PRO_0000160122" description="Glucosamine-6-phosphate deaminase 1">
    <location>
        <begin position="1"/>
        <end position="289"/>
    </location>
</feature>
<feature type="active site" description="Proton acceptor; for enolization step" evidence="1">
    <location>
        <position position="72"/>
    </location>
</feature>
<feature type="active site" description="For ring-opening step" evidence="1">
    <location>
        <position position="141"/>
    </location>
</feature>
<feature type="active site" description="Proton acceptor; for ring-opening step" evidence="1">
    <location>
        <position position="143"/>
    </location>
</feature>
<feature type="active site" description="For ring-opening step" evidence="1">
    <location>
        <position position="148"/>
    </location>
</feature>
<feature type="modified residue" description="N6-acetyllysine" evidence="14">
    <location>
        <position position="64"/>
    </location>
</feature>
<feature type="modified residue" description="Phosphothreonine" evidence="2">
    <location>
        <position position="161"/>
    </location>
</feature>
<feature type="splice variant" id="VSP_057011" description="In isoform 2." evidence="7">
    <location>
        <begin position="69"/>
        <end position="145"/>
    </location>
</feature>
<feature type="mutagenesis site" description="Decreases hexamer stability and catalytic efficiency." evidence="5">
    <location>
        <begin position="268"/>
        <end position="289"/>
    </location>
</feature>
<feature type="mutagenesis site" description="Decreases catalytic efficiency." evidence="5">
    <location>
        <begin position="275"/>
        <end position="289"/>
    </location>
</feature>
<feature type="strand" evidence="15">
    <location>
        <begin position="2"/>
        <end position="8"/>
    </location>
</feature>
<feature type="helix" evidence="15">
    <location>
        <begin position="9"/>
        <end position="27"/>
    </location>
</feature>
<feature type="strand" evidence="15">
    <location>
        <begin position="35"/>
        <end position="39"/>
    </location>
</feature>
<feature type="helix" evidence="15">
    <location>
        <begin position="43"/>
        <end position="57"/>
    </location>
</feature>
<feature type="strand" evidence="15">
    <location>
        <begin position="66"/>
        <end position="74"/>
    </location>
</feature>
<feature type="helix" evidence="15">
    <location>
        <begin position="85"/>
        <end position="92"/>
    </location>
</feature>
<feature type="helix" evidence="15">
    <location>
        <begin position="94"/>
        <end position="96"/>
    </location>
</feature>
<feature type="helix" evidence="15">
    <location>
        <begin position="101"/>
        <end position="103"/>
    </location>
</feature>
<feature type="helix" evidence="15">
    <location>
        <begin position="114"/>
        <end position="127"/>
    </location>
</feature>
<feature type="strand" evidence="15">
    <location>
        <begin position="132"/>
        <end position="136"/>
    </location>
</feature>
<feature type="strand" evidence="15">
    <location>
        <begin position="157"/>
        <end position="161"/>
    </location>
</feature>
<feature type="helix" evidence="15">
    <location>
        <begin position="164"/>
        <end position="170"/>
    </location>
</feature>
<feature type="helix" evidence="15">
    <location>
        <begin position="171"/>
        <end position="173"/>
    </location>
</feature>
<feature type="turn" evidence="15">
    <location>
        <begin position="174"/>
        <end position="176"/>
    </location>
</feature>
<feature type="helix" evidence="15">
    <location>
        <begin position="178"/>
        <end position="180"/>
    </location>
</feature>
<feature type="strand" evidence="15">
    <location>
        <begin position="183"/>
        <end position="187"/>
    </location>
</feature>
<feature type="helix" evidence="15">
    <location>
        <begin position="190"/>
        <end position="194"/>
    </location>
</feature>
<feature type="strand" evidence="15">
    <location>
        <begin position="199"/>
        <end position="203"/>
    </location>
</feature>
<feature type="helix" evidence="15">
    <location>
        <begin position="206"/>
        <end position="208"/>
    </location>
</feature>
<feature type="helix" evidence="15">
    <location>
        <begin position="209"/>
        <end position="216"/>
    </location>
</feature>
<feature type="helix" evidence="15">
    <location>
        <begin position="225"/>
        <end position="231"/>
    </location>
</feature>
<feature type="strand" evidence="15">
    <location>
        <begin position="233"/>
        <end position="240"/>
    </location>
</feature>
<feature type="helix" evidence="15">
    <location>
        <begin position="241"/>
        <end position="244"/>
    </location>
</feature>
<feature type="helix" evidence="15">
    <location>
        <begin position="249"/>
        <end position="257"/>
    </location>
</feature>
<feature type="helix" evidence="15">
    <location>
        <begin position="259"/>
        <end position="262"/>
    </location>
</feature>
<feature type="helix" evidence="15">
    <location>
        <begin position="263"/>
        <end position="265"/>
    </location>
</feature>
<name>GNPI1_HUMAN</name>
<comment type="function">
    <text evidence="3 5 6">Catalyzes the reversible conversion of alpha-D-glucosamine 6-phosphate (GlcN-6P) into beta-D-fructose 6-phosphate (Fru-6P) and ammonium ion, a regulatory reaction step in de novo uridine diphosphate-N-acetyl-alpha-D-glucosamine (UDP-GlcNAc) biosynthesis via hexosamine pathway. Deamination is coupled to aldo-keto isomerization mediating the metabolic flux from UDP-GlcNAc toward Fru-6P. At high ammonium level can drive amination and isomerization of Fru-6P toward hexosamines and UDP-GlcNAc synthesis (PubMed:21807125, PubMed:26887390). Has a role in fine tuning the metabolic fluctuations of cytosolic UDP-GlcNAc and their effects on hyaluronan synthesis that occur during tissue remodeling (PubMed:26887390). Seems to trigger calcium oscillations in mammalian eggs. These oscillations serve as the essential trigger for egg activation and early development of the embryo (By similarity).</text>
</comment>
<comment type="catalytic activity">
    <reaction evidence="5">
        <text>alpha-D-glucosamine 6-phosphate + H2O = beta-D-fructose 6-phosphate + NH4(+)</text>
        <dbReference type="Rhea" id="RHEA:12172"/>
        <dbReference type="ChEBI" id="CHEBI:15377"/>
        <dbReference type="ChEBI" id="CHEBI:28938"/>
        <dbReference type="ChEBI" id="CHEBI:57634"/>
        <dbReference type="ChEBI" id="CHEBI:75989"/>
        <dbReference type="EC" id="3.5.99.6"/>
    </reaction>
    <physiologicalReaction direction="left-to-right" evidence="10 11">
        <dbReference type="Rhea" id="RHEA:12173"/>
    </physiologicalReaction>
    <physiologicalReaction direction="right-to-left" evidence="10 11">
        <dbReference type="Rhea" id="RHEA:12174"/>
    </physiologicalReaction>
</comment>
<comment type="activity regulation">
    <text evidence="5">Allosterically activated by N-acetylglucosamine-6-phosphate (GlcNAc6P).</text>
</comment>
<comment type="biophysicochemical properties">
    <kinetics>
        <KM evidence="5">16.5 mM for alpha-D-glucosamine 6-phosphate (in the presence of GlcNAc6P)</KM>
        <KM evidence="5">0.27 mM for alpha-D-glucosamine 6-phosphate (in the absence of GlcNAc6P)</KM>
        <KM evidence="5">6.6 mM for beta-D-fructose 6-phosphate (in the presence of GlcNAc6P)</KM>
        <KM evidence="5">6.6 mM for NH4(+) (in the presence of GlcNAc6P)</KM>
        <text evidence="5">kcat is 228 sec(-1) for conversion of alpha-D-glucosamine 6-phosphate into beta-D-fructose 6-phosphate (in the presence of GlcNAc6P). kcat is 0.14 sec(-1) for conversion of alpha-D-glucosamine 6-phosphate into beta-D-fructose 6-phosphate (in the absence of GlcNAc6P). kcat is 0.84 sec(-1) for conversion of beta-D-fructose 6-phosphate into alpha-D-glucosamine 6-phosphate (in the presence of GlcNAc6P).</text>
    </kinetics>
</comment>
<comment type="pathway">
    <text evidence="11">Nucleotide-sugar biosynthesis; UDP-N-acetyl-alpha-D-glucosamine biosynthesis; alpha-D-glucosamine 6-phosphate from D-fructose 6-phosphate: step 1/1.</text>
</comment>
<comment type="subunit">
    <text evidence="4">Homohexamer.</text>
</comment>
<comment type="interaction">
    <interactant intactId="EBI-749356">
        <id>P46926</id>
    </interactant>
    <interactant intactId="EBI-10178634">
        <id>P43364-2</id>
        <label>MAGEA11</label>
    </interactant>
    <organismsDiffer>false</organismsDiffer>
    <experiments>3</experiments>
</comment>
<comment type="interaction">
    <interactant intactId="EBI-749356">
        <id>P46926</id>
    </interactant>
    <interactant intactId="EBI-739759">
        <id>Q9NRG1</id>
        <label>PRTFDC1</label>
    </interactant>
    <organismsDiffer>false</organismsDiffer>
    <experiments>3</experiments>
</comment>
<comment type="subcellular location">
    <subcellularLocation>
        <location evidence="2">Cytoplasm</location>
    </subcellularLocation>
</comment>
<comment type="alternative products">
    <event type="alternative splicing"/>
    <isoform>
        <id>P46926-1</id>
        <name>1</name>
        <sequence type="displayed"/>
    </isoform>
    <isoform>
        <id>P46926-2</id>
        <name>2</name>
        <sequence type="described" ref="VSP_057011"/>
    </isoform>
</comment>
<comment type="similarity">
    <text evidence="9">Belongs to the glucosamine/galactosamine-6-phosphate isomerase family.</text>
</comment>
<comment type="sequence caution" evidence="9">
    <conflict type="erroneous initiation">
        <sequence resource="EMBL-CDS" id="BAA06544"/>
    </conflict>
</comment>
<sequence length="289" mass="32669">MKLIILEHYSQASEWAAKYIRNRIIQFNPGPEKYFTLGLPTGSTPLGCYKKLIEYYKNGDLSFKYVKTFNMDEYVGLPRDHPESYHSFMWNNFFKHIDIHPENTHILDGNAVDLQAECDAFEEKIKAAGGIELFVGGIGPDGHIAFNEPGSSLVSRTRVKTLAMDTILANARFFDGELTKVPTMALTVGVGTVMDAREVMILITGAHKAFALYKAIEEGVNHMWTVSAFQQHPRTVFVCDEDATLELKVKTVKYFKGLMLVHNKLVDPLYSIKEKETEKSQSSKKPYSD</sequence>
<accession>P46926</accession>
<accession>B7Z3X4</accession>
<accession>D3DQE7</accession>
<keyword id="KW-0002">3D-structure</keyword>
<keyword id="KW-0007">Acetylation</keyword>
<keyword id="KW-0025">Alternative splicing</keyword>
<keyword id="KW-0119">Carbohydrate metabolism</keyword>
<keyword id="KW-0963">Cytoplasm</keyword>
<keyword id="KW-0378">Hydrolase</keyword>
<keyword id="KW-0413">Isomerase</keyword>
<keyword id="KW-0597">Phosphoprotein</keyword>
<keyword id="KW-1267">Proteomics identification</keyword>
<keyword id="KW-1185">Reference proteome</keyword>